<comment type="function">
    <text evidence="1">Site-specific tyrosine recombinase, which acts by catalyzing the cutting and rejoining of the recombining DNA molecules. The XerC-XerD complex is essential to convert dimers of the bacterial chromosome into monomers to permit their segregation at cell division. It also contributes to the segregational stability of plasmids.</text>
</comment>
<comment type="subunit">
    <text evidence="1">Forms a cyclic heterotetrameric complex composed of two molecules of XerC and two molecules of XerD.</text>
</comment>
<comment type="subcellular location">
    <subcellularLocation>
        <location evidence="1">Cytoplasm</location>
    </subcellularLocation>
</comment>
<comment type="similarity">
    <text evidence="1">Belongs to the 'phage' integrase family. XerC subfamily.</text>
</comment>
<keyword id="KW-0131">Cell cycle</keyword>
<keyword id="KW-0132">Cell division</keyword>
<keyword id="KW-0159">Chromosome partition</keyword>
<keyword id="KW-0963">Cytoplasm</keyword>
<keyword id="KW-0229">DNA integration</keyword>
<keyword id="KW-0233">DNA recombination</keyword>
<keyword id="KW-0238">DNA-binding</keyword>
<accession>B0B7R6</accession>
<organism>
    <name type="scientific">Chlamydia trachomatis serovar L2 (strain ATCC VR-902B / DSM 19102 / 434/Bu)</name>
    <dbReference type="NCBI Taxonomy" id="471472"/>
    <lineage>
        <taxon>Bacteria</taxon>
        <taxon>Pseudomonadati</taxon>
        <taxon>Chlamydiota</taxon>
        <taxon>Chlamydiia</taxon>
        <taxon>Chlamydiales</taxon>
        <taxon>Chlamydiaceae</taxon>
        <taxon>Chlamydia/Chlamydophila group</taxon>
        <taxon>Chlamydia</taxon>
    </lineage>
</organism>
<sequence>MITSFYAFLDYLKNMKASSLHTLRNYCMDLSSLKCFLEKKSDLSPTPPLSLHDNTYDYPPLSFSLFTKDNIRLYLLEQIQTHHSKRTVRRRLSAIKSFARFCVKNQLIPENPAEMIRGPRLPQELPSPLTYEQVLALMAAPELDKVTGFRDRCLLELFYSSGLRISEITALNRADIDFQSHLLHIRGKGKKERIVPMTKVAVQWLQDYLNHPDRASVEQDHQACFLNRFGKRLSTRSIDRKFQQYLLKTGLSGSITPHTIRHTIATHWLERGMDLKTIQLLLGHTSLETTTIYTHVSMKLKKQIHDETHPHNLEE</sequence>
<name>XERC_CHLT2</name>
<proteinExistence type="inferred from homology"/>
<reference key="1">
    <citation type="journal article" date="2008" name="Genome Res.">
        <title>Chlamydia trachomatis: genome sequence analysis of lymphogranuloma venereum isolates.</title>
        <authorList>
            <person name="Thomson N.R."/>
            <person name="Holden M.T.G."/>
            <person name="Carder C."/>
            <person name="Lennard N."/>
            <person name="Lockey S.J."/>
            <person name="Marsh P."/>
            <person name="Skipp P."/>
            <person name="O'Connor C.D."/>
            <person name="Goodhead I."/>
            <person name="Norbertzcak H."/>
            <person name="Harris B."/>
            <person name="Ormond D."/>
            <person name="Rance R."/>
            <person name="Quail M.A."/>
            <person name="Parkhill J."/>
            <person name="Stephens R.S."/>
            <person name="Clarke I.N."/>
        </authorList>
    </citation>
    <scope>NUCLEOTIDE SEQUENCE [LARGE SCALE GENOMIC DNA]</scope>
    <source>
        <strain>ATCC VR-902B / DSM 19102 / 434/Bu</strain>
    </source>
</reference>
<protein>
    <recommendedName>
        <fullName evidence="1">Tyrosine recombinase XerC</fullName>
    </recommendedName>
</protein>
<evidence type="ECO:0000255" key="1">
    <source>
        <dbReference type="HAMAP-Rule" id="MF_01808"/>
    </source>
</evidence>
<evidence type="ECO:0000255" key="2">
    <source>
        <dbReference type="PROSITE-ProRule" id="PRU01246"/>
    </source>
</evidence>
<evidence type="ECO:0000255" key="3">
    <source>
        <dbReference type="PROSITE-ProRule" id="PRU01248"/>
    </source>
</evidence>
<gene>
    <name evidence="1" type="primary">xerC</name>
    <name type="ordered locus">CTL0601</name>
</gene>
<feature type="chain" id="PRO_1000187585" description="Tyrosine recombinase XerC">
    <location>
        <begin position="1"/>
        <end position="315"/>
    </location>
</feature>
<feature type="domain" description="Core-binding (CB)" evidence="3">
    <location>
        <begin position="1"/>
        <end position="103"/>
    </location>
</feature>
<feature type="domain" description="Tyr recombinase" evidence="2">
    <location>
        <begin position="124"/>
        <end position="306"/>
    </location>
</feature>
<feature type="active site" evidence="1">
    <location>
        <position position="164"/>
    </location>
</feature>
<feature type="active site" evidence="1">
    <location>
        <position position="188"/>
    </location>
</feature>
<feature type="active site" evidence="1">
    <location>
        <position position="258"/>
    </location>
</feature>
<feature type="active site" evidence="1">
    <location>
        <position position="261"/>
    </location>
</feature>
<feature type="active site" evidence="1">
    <location>
        <position position="284"/>
    </location>
</feature>
<feature type="active site" description="O-(3'-phospho-DNA)-tyrosine intermediate" evidence="1">
    <location>
        <position position="293"/>
    </location>
</feature>
<dbReference type="EMBL" id="AM884176">
    <property type="protein sequence ID" value="CAP04042.1"/>
    <property type="molecule type" value="Genomic_DNA"/>
</dbReference>
<dbReference type="RefSeq" id="WP_009872581.1">
    <property type="nucleotide sequence ID" value="NC_010287.1"/>
</dbReference>
<dbReference type="RefSeq" id="YP_001654677.1">
    <property type="nucleotide sequence ID" value="NC_010287.1"/>
</dbReference>
<dbReference type="SMR" id="B0B7R6"/>
<dbReference type="KEGG" id="ctb:CTL0601"/>
<dbReference type="PATRIC" id="fig|471472.4.peg.649"/>
<dbReference type="HOGENOM" id="CLU_027562_9_0_0"/>
<dbReference type="Proteomes" id="UP001154402">
    <property type="component" value="Chromosome"/>
</dbReference>
<dbReference type="GO" id="GO:0005737">
    <property type="term" value="C:cytoplasm"/>
    <property type="evidence" value="ECO:0007669"/>
    <property type="project" value="UniProtKB-SubCell"/>
</dbReference>
<dbReference type="GO" id="GO:0003677">
    <property type="term" value="F:DNA binding"/>
    <property type="evidence" value="ECO:0007669"/>
    <property type="project" value="UniProtKB-KW"/>
</dbReference>
<dbReference type="GO" id="GO:0009037">
    <property type="term" value="F:tyrosine-based site-specific recombinase activity"/>
    <property type="evidence" value="ECO:0007669"/>
    <property type="project" value="UniProtKB-UniRule"/>
</dbReference>
<dbReference type="GO" id="GO:0051301">
    <property type="term" value="P:cell division"/>
    <property type="evidence" value="ECO:0007669"/>
    <property type="project" value="UniProtKB-KW"/>
</dbReference>
<dbReference type="GO" id="GO:0007059">
    <property type="term" value="P:chromosome segregation"/>
    <property type="evidence" value="ECO:0007669"/>
    <property type="project" value="UniProtKB-UniRule"/>
</dbReference>
<dbReference type="GO" id="GO:0006313">
    <property type="term" value="P:DNA transposition"/>
    <property type="evidence" value="ECO:0007669"/>
    <property type="project" value="UniProtKB-UniRule"/>
</dbReference>
<dbReference type="CDD" id="cd00798">
    <property type="entry name" value="INT_XerDC_C"/>
    <property type="match status" value="1"/>
</dbReference>
<dbReference type="Gene3D" id="1.10.150.130">
    <property type="match status" value="1"/>
</dbReference>
<dbReference type="Gene3D" id="1.10.443.10">
    <property type="entry name" value="Intergrase catalytic core"/>
    <property type="match status" value="1"/>
</dbReference>
<dbReference type="HAMAP" id="MF_01808">
    <property type="entry name" value="Recomb_XerC_XerD"/>
    <property type="match status" value="1"/>
</dbReference>
<dbReference type="InterPro" id="IPR044068">
    <property type="entry name" value="CB"/>
</dbReference>
<dbReference type="InterPro" id="IPR011010">
    <property type="entry name" value="DNA_brk_join_enz"/>
</dbReference>
<dbReference type="InterPro" id="IPR013762">
    <property type="entry name" value="Integrase-like_cat_sf"/>
</dbReference>
<dbReference type="InterPro" id="IPR002104">
    <property type="entry name" value="Integrase_catalytic"/>
</dbReference>
<dbReference type="InterPro" id="IPR010998">
    <property type="entry name" value="Integrase_recombinase_N"/>
</dbReference>
<dbReference type="InterPro" id="IPR004107">
    <property type="entry name" value="Integrase_SAM-like_N"/>
</dbReference>
<dbReference type="InterPro" id="IPR011931">
    <property type="entry name" value="Recomb_XerC"/>
</dbReference>
<dbReference type="InterPro" id="IPR023009">
    <property type="entry name" value="Tyrosine_recombinase_XerC/XerD"/>
</dbReference>
<dbReference type="InterPro" id="IPR050090">
    <property type="entry name" value="Tyrosine_recombinase_XerCD"/>
</dbReference>
<dbReference type="NCBIfam" id="TIGR02224">
    <property type="entry name" value="recomb_XerC"/>
    <property type="match status" value="1"/>
</dbReference>
<dbReference type="PANTHER" id="PTHR30349">
    <property type="entry name" value="PHAGE INTEGRASE-RELATED"/>
    <property type="match status" value="1"/>
</dbReference>
<dbReference type="PANTHER" id="PTHR30349:SF77">
    <property type="entry name" value="TYROSINE RECOMBINASE XERC"/>
    <property type="match status" value="1"/>
</dbReference>
<dbReference type="Pfam" id="PF02899">
    <property type="entry name" value="Phage_int_SAM_1"/>
    <property type="match status" value="1"/>
</dbReference>
<dbReference type="Pfam" id="PF00589">
    <property type="entry name" value="Phage_integrase"/>
    <property type="match status" value="1"/>
</dbReference>
<dbReference type="SUPFAM" id="SSF56349">
    <property type="entry name" value="DNA breaking-rejoining enzymes"/>
    <property type="match status" value="1"/>
</dbReference>
<dbReference type="PROSITE" id="PS51900">
    <property type="entry name" value="CB"/>
    <property type="match status" value="1"/>
</dbReference>
<dbReference type="PROSITE" id="PS51898">
    <property type="entry name" value="TYR_RECOMBINASE"/>
    <property type="match status" value="1"/>
</dbReference>